<comment type="subunit">
    <text evidence="1">May form a heterooligomeric complex that consists of seven subunits: mnhA2, mnhB2, mnhC2, mnhD2, mnhE2, mnhF2 and mnhG2.</text>
</comment>
<comment type="subcellular location">
    <subcellularLocation>
        <location evidence="3">Cell membrane</location>
        <topology evidence="3">Multi-pass membrane protein</topology>
    </subcellularLocation>
</comment>
<comment type="similarity">
    <text evidence="3">Belongs to the CPA3 antiporters (TC 2.A.63) subunit G family.</text>
</comment>
<evidence type="ECO:0000250" key="1"/>
<evidence type="ECO:0000255" key="2"/>
<evidence type="ECO:0000305" key="3"/>
<protein>
    <recommendedName>
        <fullName>Putative antiporter subunit mnhG2</fullName>
    </recommendedName>
    <alternativeName>
        <fullName>Mrp complex subunit G2</fullName>
    </alternativeName>
    <alternativeName>
        <fullName>Putative NADH-ubiquinone oxidoreductase subunit mnhF2</fullName>
    </alternativeName>
</protein>
<name>MNHG2_STAA2</name>
<organism>
    <name type="scientific">Staphylococcus aureus (strain JH1)</name>
    <dbReference type="NCBI Taxonomy" id="359787"/>
    <lineage>
        <taxon>Bacteria</taxon>
        <taxon>Bacillati</taxon>
        <taxon>Bacillota</taxon>
        <taxon>Bacilli</taxon>
        <taxon>Bacillales</taxon>
        <taxon>Staphylococcaceae</taxon>
        <taxon>Staphylococcus</taxon>
    </lineage>
</organism>
<keyword id="KW-0050">Antiport</keyword>
<keyword id="KW-1003">Cell membrane</keyword>
<keyword id="KW-0406">Ion transport</keyword>
<keyword id="KW-0472">Membrane</keyword>
<keyword id="KW-0812">Transmembrane</keyword>
<keyword id="KW-1133">Transmembrane helix</keyword>
<keyword id="KW-0813">Transport</keyword>
<proteinExistence type="inferred from homology"/>
<accession>A6TZA5</accession>
<dbReference type="EMBL" id="CP000736">
    <property type="protein sequence ID" value="ABR51523.1"/>
    <property type="molecule type" value="Genomic_DNA"/>
</dbReference>
<dbReference type="SMR" id="A6TZA5"/>
<dbReference type="KEGG" id="sah:SaurJH1_0666"/>
<dbReference type="HOGENOM" id="CLU_121334_0_3_9"/>
<dbReference type="GO" id="GO:0005886">
    <property type="term" value="C:plasma membrane"/>
    <property type="evidence" value="ECO:0007669"/>
    <property type="project" value="UniProtKB-SubCell"/>
</dbReference>
<dbReference type="GO" id="GO:0015385">
    <property type="term" value="F:sodium:proton antiporter activity"/>
    <property type="evidence" value="ECO:0007669"/>
    <property type="project" value="TreeGrafter"/>
</dbReference>
<dbReference type="InterPro" id="IPR005133">
    <property type="entry name" value="PhaG_MnhG_YufB"/>
</dbReference>
<dbReference type="NCBIfam" id="TIGR01300">
    <property type="entry name" value="CPA3_mnhG_phaG"/>
    <property type="match status" value="1"/>
</dbReference>
<dbReference type="NCBIfam" id="NF009236">
    <property type="entry name" value="PRK12586.1"/>
    <property type="match status" value="1"/>
</dbReference>
<dbReference type="NCBIfam" id="NF009314">
    <property type="entry name" value="PRK12674.1-2"/>
    <property type="match status" value="1"/>
</dbReference>
<dbReference type="PANTHER" id="PTHR34703">
    <property type="entry name" value="ANTIPORTER SUBUNIT MNHG2-RELATED"/>
    <property type="match status" value="1"/>
</dbReference>
<dbReference type="PANTHER" id="PTHR34703:SF1">
    <property type="entry name" value="ANTIPORTER SUBUNIT MNHG2-RELATED"/>
    <property type="match status" value="1"/>
</dbReference>
<dbReference type="Pfam" id="PF03334">
    <property type="entry name" value="PhaG_MnhG_YufB"/>
    <property type="match status" value="1"/>
</dbReference>
<feature type="chain" id="PRO_5000256928" description="Putative antiporter subunit mnhG2">
    <location>
        <begin position="1"/>
        <end position="145"/>
    </location>
</feature>
<feature type="transmembrane region" description="Helical" evidence="2">
    <location>
        <begin position="11"/>
        <end position="31"/>
    </location>
</feature>
<feature type="transmembrane region" description="Helical" evidence="2">
    <location>
        <begin position="51"/>
        <end position="71"/>
    </location>
</feature>
<feature type="transmembrane region" description="Helical" evidence="2">
    <location>
        <begin position="72"/>
        <end position="92"/>
    </location>
</feature>
<sequence length="145" mass="16302">MEITKEIFSLIAAVMLLLGSFIALISAIGIVKFQDVFLRSHAATKSSTLSVLLTLIGVLIYFIVNTGFFSVRLLLSLVFINLTSPVGMHLVARAAYRNGAYMYRKNDAHTHASILLSSNEQNSTEALQLRAKKREEHRKKWYQND</sequence>
<reference key="1">
    <citation type="submission" date="2007-06" db="EMBL/GenBank/DDBJ databases">
        <title>Complete sequence of chromosome of Staphylococcus aureus subsp. aureus JH1.</title>
        <authorList>
            <consortium name="US DOE Joint Genome Institute"/>
            <person name="Copeland A."/>
            <person name="Lucas S."/>
            <person name="Lapidus A."/>
            <person name="Barry K."/>
            <person name="Detter J.C."/>
            <person name="Glavina del Rio T."/>
            <person name="Hammon N."/>
            <person name="Israni S."/>
            <person name="Dalin E."/>
            <person name="Tice H."/>
            <person name="Pitluck S."/>
            <person name="Chain P."/>
            <person name="Malfatti S."/>
            <person name="Shin M."/>
            <person name="Vergez L."/>
            <person name="Schmutz J."/>
            <person name="Larimer F."/>
            <person name="Land M."/>
            <person name="Hauser L."/>
            <person name="Kyrpides N."/>
            <person name="Ivanova N."/>
            <person name="Tomasz A."/>
            <person name="Richardson P."/>
        </authorList>
    </citation>
    <scope>NUCLEOTIDE SEQUENCE [LARGE SCALE GENOMIC DNA]</scope>
    <source>
        <strain>JH1</strain>
    </source>
</reference>
<gene>
    <name type="primary">mnhG2</name>
    <name type="synonym">mrpG2</name>
    <name type="ordered locus">SaurJH1_0666</name>
</gene>